<keyword id="KW-0192">Crown gall tumor</keyword>
<keyword id="KW-1048">Host nucleus</keyword>
<keyword id="KW-0614">Plasmid</keyword>
<keyword id="KW-0833">Ubl conjugation pathway</keyword>
<keyword id="KW-0843">Virulence</keyword>
<gene>
    <name evidence="5" type="primary">virF</name>
</gene>
<proteinExistence type="evidence at protein level"/>
<accession>P15597</accession>
<feature type="chain" id="PRO_0000065870" description="Virulence protein F">
    <location>
        <begin position="1"/>
        <end position="202"/>
    </location>
</feature>
<feature type="domain" description="F-box" evidence="2">
    <location>
        <begin position="20"/>
        <end position="42"/>
    </location>
</feature>
<feature type="region of interest" description="Disordered" evidence="3">
    <location>
        <begin position="1"/>
        <end position="21"/>
    </location>
</feature>
<feature type="compositionally biased region" description="Polar residues" evidence="3">
    <location>
        <begin position="1"/>
        <end position="15"/>
    </location>
</feature>
<name>VIRF_AGRT9</name>
<reference key="1">
    <citation type="journal article" date="1990" name="Plant Mol. Biol.">
        <title>Octopine and nopaline strains of Agrobacterium tumefaciens differ in virulence; molecular characterization of the virF locus.</title>
        <authorList>
            <person name="Melchers L.S."/>
            <person name="Maroney M.J."/>
            <person name="den Dulk-Ras A."/>
            <person name="Thompson D.V."/>
            <person name="van Vuuren H.A.J."/>
            <person name="Schilperoort R.A."/>
            <person name="Hooykaas P.J.J."/>
        </authorList>
    </citation>
    <scope>NUCLEOTIDE SEQUENCE [GENOMIC DNA]</scope>
</reference>
<reference key="2">
    <citation type="journal article" date="2015" name="PLoS ONE">
        <title>Interaction of Arabidopsis trihelix-domain transcription factors VFP3 and VFP5 with Agrobacterium virulence protein VirF.</title>
        <authorList>
            <person name="Garcia-Cano E."/>
            <person name="Magori S."/>
            <person name="Sun Q."/>
            <person name="Ding Z."/>
            <person name="Lazarowitz S.G."/>
            <person name="Citovsky V."/>
        </authorList>
    </citation>
    <scope>INTERACTION WITH ARABIDOPSIS THALIANA ENAP1/VFP3 AND VFP5</scope>
    <scope>SUBCELLULAR LOCATION</scope>
</reference>
<geneLocation type="plasmid">
    <name>pTi15955</name>
</geneLocation>
<sequence>MRNSSLRDASGSNDAQVPHKTELLNLPDHVLTEVAKRLATNNPVESAENIANFSKSHRFTRDAVRTEPLEKFSSRLKILSRNAKLLSHAVRHAATLPDGEQLSEAQLSQMRSEVATRPVLGVAYTHQDGQPEERLSGNHLDHKINNIPNLVFNVAEPIMFNEISALEVMAEVRPIARSIKTAHDDARAELMSADRPRSTRGL</sequence>
<protein>
    <recommendedName>
        <fullName evidence="5">Virulence protein F</fullName>
    </recommendedName>
</protein>
<dbReference type="EMBL" id="X13981">
    <property type="protein sequence ID" value="CAA32163.1"/>
    <property type="molecule type" value="Genomic_DNA"/>
</dbReference>
<dbReference type="PIR" id="S15915">
    <property type="entry name" value="S07979"/>
</dbReference>
<dbReference type="RefSeq" id="NP_059824.1">
    <property type="nucleotide sequence ID" value="NC_002377.1"/>
</dbReference>
<dbReference type="IntAct" id="P15597">
    <property type="interactions" value="8"/>
</dbReference>
<dbReference type="GO" id="GO:0042025">
    <property type="term" value="C:host cell nucleus"/>
    <property type="evidence" value="ECO:0000314"/>
    <property type="project" value="UniProtKB"/>
</dbReference>
<comment type="function">
    <text evidence="1">In the host plant, component of SCF(virF) E3 ubiquitin ligase complexes, which mediate the ubiquitination and subsequent proteasomal degradation of target proteins such as the host VIP1, after its implication in T-DNA translocation to the host nucleus (By similarity). Required for the formation of tumors of a wild-type size on certain plant species only.</text>
</comment>
<comment type="subunit">
    <text evidence="1 4">Component of SCF(virF) E3 ubiquitin ligase complexes. Interacts with host VIP1 and SKP1A (By similarity). Interacts with Arabidopsis thaliana ENAP1/VFP3 and VFP5 in the host cell nucleus (PubMed:26571494).</text>
</comment>
<comment type="interaction">
    <interactant intactId="EBI-605118">
        <id>P15597</id>
    </interactant>
    <interactant intactId="EBI-607786">
        <id>Q9C5T5</id>
        <label>ASK10</label>
    </interactant>
    <organismsDiffer>true</organismsDiffer>
    <experiments>4</experiments>
</comment>
<comment type="interaction">
    <interactant intactId="EBI-605118">
        <id>P15597</id>
    </interactant>
    <interactant intactId="EBI-532357">
        <id>Q39255</id>
        <label>SKP1A</label>
    </interactant>
    <organismsDiffer>true</organismsDiffer>
    <experiments>6</experiments>
</comment>
<comment type="interaction">
    <interactant intactId="EBI-605118">
        <id>P15597</id>
    </interactant>
    <interactant intactId="EBI-604076">
        <id>Q9FHW7</id>
        <label>SKP1B</label>
    </interactant>
    <organismsDiffer>true</organismsDiffer>
    <experiments>5</experiments>
</comment>
<comment type="interaction">
    <interactant intactId="EBI-605118">
        <id>P15597</id>
    </interactant>
    <interactant intactId="EBI-606057">
        <id>Q9MA75</id>
        <label>VIP1</label>
    </interactant>
    <organismsDiffer>true</organismsDiffer>
    <experiments>3</experiments>
</comment>
<comment type="subcellular location">
    <subcellularLocation>
        <location evidence="4">Host nucleus</location>
    </subcellularLocation>
</comment>
<evidence type="ECO:0000250" key="1"/>
<evidence type="ECO:0000255" key="2">
    <source>
        <dbReference type="PROSITE-ProRule" id="PRU00080"/>
    </source>
</evidence>
<evidence type="ECO:0000256" key="3">
    <source>
        <dbReference type="SAM" id="MobiDB-lite"/>
    </source>
</evidence>
<evidence type="ECO:0000269" key="4">
    <source>
    </source>
</evidence>
<evidence type="ECO:0000303" key="5">
    <source>
    </source>
</evidence>
<organism>
    <name type="scientific">Agrobacterium tumefaciens (strain 15955)</name>
    <dbReference type="NCBI Taxonomy" id="190386"/>
    <lineage>
        <taxon>Bacteria</taxon>
        <taxon>Pseudomonadati</taxon>
        <taxon>Pseudomonadota</taxon>
        <taxon>Alphaproteobacteria</taxon>
        <taxon>Hyphomicrobiales</taxon>
        <taxon>Rhizobiaceae</taxon>
        <taxon>Rhizobium/Agrobacterium group</taxon>
        <taxon>Agrobacterium</taxon>
        <taxon>Agrobacterium tumefaciens complex</taxon>
    </lineage>
</organism>